<organismHost>
    <name type="scientific">Aves</name>
    <dbReference type="NCBI Taxonomy" id="8782"/>
</organismHost>
<organismHost>
    <name type="scientific">Cetacea</name>
    <name type="common">whales</name>
    <dbReference type="NCBI Taxonomy" id="9721"/>
</organismHost>
<organismHost>
    <name type="scientific">Homo sapiens</name>
    <name type="common">Human</name>
    <dbReference type="NCBI Taxonomy" id="9606"/>
</organismHost>
<organismHost>
    <name type="scientific">Phocidae</name>
    <name type="common">true seals</name>
    <dbReference type="NCBI Taxonomy" id="9709"/>
</organismHost>
<organismHost>
    <name type="scientific">Sus scrofa</name>
    <name type="common">Pig</name>
    <dbReference type="NCBI Taxonomy" id="9823"/>
</organismHost>
<sequence length="759" mass="86010">MERIKELRNLMSQSRTREILTKTTVDHMAIIKKYTSGRQEKNPSLRMKWMMAMKYPITADKRITEMVPERNEQGQTLWSKMSDAGSDRVMVSPLAVTWWNRNGPVTSTVHYPKVYKTYFDKVERLKHGTFGPVHFRNQVKIRRRVDINPGHADLSAKEAQDVIMEVVFPNEVGARILTSESQLPITKEKKEELQDCKISPLMVAYMLERELVRKTRFLPVAGGTSSVYIEVLHLTQGTCWEQMYTPGGEVRNDDIDQSLIIAARNIVRRAAVSADPLASLLEMCHSTQIGGTRMVDILRQNPTEEQAVDICKAAMGLRISSSFSFGGFTFKRTSGSSIKREEEVLTGNLQTLKIRVHEGYEEFTMVGKRATATLRKATRRLVQLIVSGRDEQSIAEAIIVAMVFSQEDCMIKAVRGDLNFVNRANQRLNPMHQLLRHFQKDAKVLFQNWGIEHIDNVMGMVGVLPDMTPSTEMSMRGIRVSKMGVDEYSSTERVVVSIDRFLRVRDQRGNVLLSPEEVSETHGTEKLTITYSSSMMWEINGPESVLVNTYQWIIRNWETVKIQWSQSPTMLYNKMEFEPFQSLVPKAIRGQYSGFVRTLFQQMRDVLGTFDTTQIIKLLPFAAAPPKQSRMQFSSLTVNVRGSGMRILVRGNSPVFNYNKTTKRLTILGKDAGTLIEDPDESTSGVESAVLRGFLILGKEDRRYGPALSINELSNLAKGEKANVLIGQGDVVLVMKRKRDSSILTDSQTATKRIQMAIN</sequence>
<gene>
    <name evidence="1" type="primary">PB2</name>
</gene>
<feature type="chain" id="PRO_0000279653" description="Polymerase basic protein 2">
    <location>
        <begin position="1"/>
        <end position="759"/>
    </location>
</feature>
<feature type="short sequence motif" description="Nuclear localization signal" evidence="1">
    <location>
        <begin position="736"/>
        <end position="739"/>
    </location>
</feature>
<feature type="site" description="Mammalian adaptation" evidence="1">
    <location>
        <position position="627"/>
    </location>
</feature>
<feature type="sequence conflict" description="In Ref. 2; ABD61561." ref="2">
    <original>V</original>
    <variation>A</variation>
    <location>
        <position position="122"/>
    </location>
</feature>
<feature type="sequence conflict" description="In Ref. 2; ABD61561." ref="2">
    <original>P</original>
    <variation>T</variation>
    <location>
        <position position="184"/>
    </location>
</feature>
<feature type="sequence conflict" description="In Ref. 2; ABD61561." ref="2">
    <original>K</original>
    <variation>R</variation>
    <location>
        <position position="526"/>
    </location>
</feature>
<feature type="sequence conflict" description="In Ref. 2; ABD61561." ref="2">
    <original>Q</original>
    <variation>R</variation>
    <location>
        <position position="755"/>
    </location>
</feature>
<protein>
    <recommendedName>
        <fullName evidence="1">Polymerase basic protein 2</fullName>
    </recommendedName>
    <alternativeName>
        <fullName evidence="1">RNA-directed RNA polymerase subunit P3</fullName>
    </alternativeName>
</protein>
<proteinExistence type="inferred from homology"/>
<keyword id="KW-1157">Cap snatching</keyword>
<keyword id="KW-1262">Eukaryotic host gene expression shutoff by virus</keyword>
<keyword id="KW-1191">Eukaryotic host transcription shutoff by virus</keyword>
<keyword id="KW-1190">Host gene expression shutoff by virus</keyword>
<keyword id="KW-1045">Host mitochondrion</keyword>
<keyword id="KW-1048">Host nucleus</keyword>
<keyword id="KW-0945">Host-virus interaction</keyword>
<keyword id="KW-1090">Inhibition of host innate immune response by virus</keyword>
<keyword id="KW-1097">Inhibition of host MAVS by virus</keyword>
<keyword id="KW-1113">Inhibition of host RLR pathway by virus</keyword>
<keyword id="KW-1104">Inhibition of host RNA polymerase II by virus</keyword>
<keyword id="KW-0506">mRNA capping</keyword>
<keyword id="KW-0507">mRNA processing</keyword>
<keyword id="KW-0899">Viral immunoevasion</keyword>
<keyword id="KW-1195">Viral transcription</keyword>
<keyword id="KW-0946">Virion</keyword>
<name>PB2_I77A4</name>
<reference key="1">
    <citation type="journal article" date="2000" name="Virus Res.">
        <title>Genetic characterization of H3N2 influenza viruses isolated from pigs in North America, 1977-1999: evidence for wholly human and reassortant virus genotypes.</title>
        <authorList>
            <person name="Karasin A.I."/>
            <person name="Schutten M.M."/>
            <person name="Cooper L.A."/>
            <person name="Smith C.B."/>
            <person name="Subbarao K."/>
            <person name="Anderson G.A."/>
            <person name="Carman S."/>
            <person name="Olsen C.W."/>
        </authorList>
    </citation>
    <scope>NUCLEOTIDE SEQUENCE [GENOMIC RNA]</scope>
</reference>
<reference key="2">
    <citation type="submission" date="2006-03" db="EMBL/GenBank/DDBJ databases">
        <title>The NIAID influenza genome sequencing project.</title>
        <authorList>
            <person name="Ghedin E."/>
            <person name="Spiro D."/>
            <person name="Miller N."/>
            <person name="Zaborsky J."/>
            <person name="Feldblyum T."/>
            <person name="Subbu V."/>
            <person name="Shumway M."/>
            <person name="Sparenborg J."/>
            <person name="Groveman L."/>
            <person name="Halpin R."/>
            <person name="Sitz J."/>
            <person name="Koo H."/>
            <person name="Salzberg S.L."/>
            <person name="Webster R.G."/>
            <person name="Hoffmann E."/>
            <person name="Krauss S."/>
            <person name="Naeve C."/>
            <person name="Bao Y."/>
            <person name="Bolotov P."/>
            <person name="Dernovoy D."/>
            <person name="Kiryutin B."/>
            <person name="Lipman D.J."/>
            <person name="Tatusova T."/>
        </authorList>
    </citation>
    <scope>NUCLEOTIDE SEQUENCE [GENOMIC RNA]</scope>
</reference>
<evidence type="ECO:0000255" key="1">
    <source>
        <dbReference type="HAMAP-Rule" id="MF_04062"/>
    </source>
</evidence>
<comment type="function">
    <text evidence="1">Plays an essential role in transcription initiation and cap-stealing mechanism, in which cellular capped pre-mRNAs are used to generate primers for viral transcription. Recognizes and binds the 7-methylguanosine-containing cap of the target pre-RNA which is subsequently cleaved after 10-13 nucleotides by the viral protein PA. Plays a role in the initiation of the viral genome replication and modulates the activity of the ribonucleoprotein (RNP) complex. In addition, participates in the inhibition of type I interferon induction through interaction with and inhibition of the host mitochondrial antiviral signaling protein MAVS.</text>
</comment>
<comment type="subunit">
    <text evidence="1">Influenza RNA polymerase is composed of three subunits: PB1, PB2 and PA. Interacts (via N-terminus) with PB1 (via C-terminus). Interacts with nucleoprotein NP (via N-terminus). Interacts (via N-terminus) with host MAVS (via N-terminus); this interaction inhibits host innate immune response.</text>
</comment>
<comment type="subcellular location">
    <subcellularLocation>
        <location evidence="1">Virion</location>
    </subcellularLocation>
    <subcellularLocation>
        <location evidence="1">Host nucleus</location>
    </subcellularLocation>
    <subcellularLocation>
        <location evidence="1">Host mitochondrion</location>
    </subcellularLocation>
</comment>
<comment type="similarity">
    <text evidence="1">Belongs to the influenza viruses PB2 family.</text>
</comment>
<organism>
    <name type="scientific">Influenza A virus (strain A/Swine/Colorado/1/1977 H3N2)</name>
    <dbReference type="NCBI Taxonomy" id="385645"/>
    <lineage>
        <taxon>Viruses</taxon>
        <taxon>Riboviria</taxon>
        <taxon>Orthornavirae</taxon>
        <taxon>Negarnaviricota</taxon>
        <taxon>Polyploviricotina</taxon>
        <taxon>Insthoviricetes</taxon>
        <taxon>Articulavirales</taxon>
        <taxon>Orthomyxoviridae</taxon>
        <taxon>Alphainfluenzavirus</taxon>
        <taxon>Alphainfluenzavirus influenzae</taxon>
        <taxon>Influenza A virus</taxon>
    </lineage>
</organism>
<dbReference type="EMBL" id="AF251394">
    <property type="protein sequence ID" value="AAG01748.1"/>
    <property type="molecule type" value="Genomic_RNA"/>
</dbReference>
<dbReference type="EMBL" id="CY009307">
    <property type="protein sequence ID" value="ABD61561.1"/>
    <property type="molecule type" value="Genomic_RNA"/>
</dbReference>
<dbReference type="SMR" id="Q9EA38"/>
<dbReference type="PRO" id="PR:Q9EA38"/>
<dbReference type="Proteomes" id="UP000009193">
    <property type="component" value="Genome"/>
</dbReference>
<dbReference type="GO" id="GO:0033650">
    <property type="term" value="C:host cell mitochondrion"/>
    <property type="evidence" value="ECO:0007669"/>
    <property type="project" value="UniProtKB-SubCell"/>
</dbReference>
<dbReference type="GO" id="GO:0042025">
    <property type="term" value="C:host cell nucleus"/>
    <property type="evidence" value="ECO:0007669"/>
    <property type="project" value="UniProtKB-SubCell"/>
</dbReference>
<dbReference type="GO" id="GO:0044423">
    <property type="term" value="C:virion component"/>
    <property type="evidence" value="ECO:0007669"/>
    <property type="project" value="UniProtKB-UniRule"/>
</dbReference>
<dbReference type="GO" id="GO:0003723">
    <property type="term" value="F:RNA binding"/>
    <property type="evidence" value="ECO:0007669"/>
    <property type="project" value="UniProtKB-UniRule"/>
</dbReference>
<dbReference type="GO" id="GO:0003968">
    <property type="term" value="F:RNA-directed RNA polymerase activity"/>
    <property type="evidence" value="ECO:0007669"/>
    <property type="project" value="UniProtKB-UniRule"/>
</dbReference>
<dbReference type="GO" id="GO:0006370">
    <property type="term" value="P:7-methylguanosine mRNA capping"/>
    <property type="evidence" value="ECO:0007669"/>
    <property type="project" value="UniProtKB-UniRule"/>
</dbReference>
<dbReference type="GO" id="GO:0075526">
    <property type="term" value="P:cap snatching"/>
    <property type="evidence" value="ECO:0007669"/>
    <property type="project" value="UniProtKB-UniRule"/>
</dbReference>
<dbReference type="GO" id="GO:0006351">
    <property type="term" value="P:DNA-templated transcription"/>
    <property type="evidence" value="ECO:0007669"/>
    <property type="project" value="UniProtKB-UniRule"/>
</dbReference>
<dbReference type="GO" id="GO:0039545">
    <property type="term" value="P:symbiont-mediated suppression of host cytoplasmic pattern recognition receptor signaling pathway via inhibition of MAVS activity"/>
    <property type="evidence" value="ECO:0007669"/>
    <property type="project" value="UniProtKB-UniRule"/>
</dbReference>
<dbReference type="GO" id="GO:0039657">
    <property type="term" value="P:symbiont-mediated suppression of host gene expression"/>
    <property type="evidence" value="ECO:0007669"/>
    <property type="project" value="UniProtKB-KW"/>
</dbReference>
<dbReference type="GO" id="GO:0039523">
    <property type="term" value="P:symbiont-mediated suppression of host mRNA transcription via inhibition of RNA polymerase II activity"/>
    <property type="evidence" value="ECO:0007669"/>
    <property type="project" value="UniProtKB-UniRule"/>
</dbReference>
<dbReference type="GO" id="GO:0039694">
    <property type="term" value="P:viral RNA genome replication"/>
    <property type="evidence" value="ECO:0007669"/>
    <property type="project" value="InterPro"/>
</dbReference>
<dbReference type="FunFam" id="3.30.30.90:FF:000001">
    <property type="entry name" value="Polymerase basic protein 2"/>
    <property type="match status" value="1"/>
</dbReference>
<dbReference type="Gene3D" id="3.30.30.90">
    <property type="entry name" value="Polymerase Basic Protein 2, C-terminal domain"/>
    <property type="match status" value="1"/>
</dbReference>
<dbReference type="HAMAP" id="MF_04062">
    <property type="entry name" value="INV_PB2"/>
    <property type="match status" value="1"/>
</dbReference>
<dbReference type="InterPro" id="IPR049110">
    <property type="entry name" value="Flu_PB2_2nd"/>
</dbReference>
<dbReference type="InterPro" id="IPR049114">
    <property type="entry name" value="Flu_PB2_6th"/>
</dbReference>
<dbReference type="InterPro" id="IPR049115">
    <property type="entry name" value="Flu_PB2_C"/>
</dbReference>
<dbReference type="InterPro" id="IPR048298">
    <property type="entry name" value="Flu_PB2_CAP-bd"/>
</dbReference>
<dbReference type="InterPro" id="IPR049111">
    <property type="entry name" value="Flu_PB2_middle"/>
</dbReference>
<dbReference type="InterPro" id="IPR049106">
    <property type="entry name" value="Flu_PB2_N"/>
</dbReference>
<dbReference type="InterPro" id="IPR001591">
    <property type="entry name" value="INV_PB2"/>
</dbReference>
<dbReference type="InterPro" id="IPR049113">
    <property type="entry name" value="PB2_helical"/>
</dbReference>
<dbReference type="InterPro" id="IPR037258">
    <property type="entry name" value="PDB2_C"/>
</dbReference>
<dbReference type="Pfam" id="PF20947">
    <property type="entry name" value="Flu_PB2_1st"/>
    <property type="match status" value="1"/>
</dbReference>
<dbReference type="Pfam" id="PF20948">
    <property type="entry name" value="Flu_PB2_2nd"/>
    <property type="match status" value="1"/>
</dbReference>
<dbReference type="Pfam" id="PF20949">
    <property type="entry name" value="Flu_PB2_3rd"/>
    <property type="match status" value="1"/>
</dbReference>
<dbReference type="Pfam" id="PF20950">
    <property type="entry name" value="Flu_PB2_4th"/>
    <property type="match status" value="1"/>
</dbReference>
<dbReference type="Pfam" id="PF00604">
    <property type="entry name" value="Flu_PB2_5th"/>
    <property type="match status" value="1"/>
</dbReference>
<dbReference type="Pfam" id="PF20951">
    <property type="entry name" value="Flu_PB2_6th"/>
    <property type="match status" value="1"/>
</dbReference>
<dbReference type="Pfam" id="PF20952">
    <property type="entry name" value="Flu_PB2_7th"/>
    <property type="match status" value="1"/>
</dbReference>
<dbReference type="SUPFAM" id="SSF160453">
    <property type="entry name" value="PB2 C-terminal domain-like"/>
    <property type="match status" value="1"/>
</dbReference>
<accession>Q9EA38</accession>
<accession>Q288Y6</accession>